<organism>
    <name type="scientific">Arabidopsis thaliana</name>
    <name type="common">Mouse-ear cress</name>
    <dbReference type="NCBI Taxonomy" id="3702"/>
    <lineage>
        <taxon>Eukaryota</taxon>
        <taxon>Viridiplantae</taxon>
        <taxon>Streptophyta</taxon>
        <taxon>Embryophyta</taxon>
        <taxon>Tracheophyta</taxon>
        <taxon>Spermatophyta</taxon>
        <taxon>Magnoliopsida</taxon>
        <taxon>eudicotyledons</taxon>
        <taxon>Gunneridae</taxon>
        <taxon>Pentapetalae</taxon>
        <taxon>rosids</taxon>
        <taxon>malvids</taxon>
        <taxon>Brassicales</taxon>
        <taxon>Brassicaceae</taxon>
        <taxon>Camelineae</taxon>
        <taxon>Arabidopsis</taxon>
    </lineage>
</organism>
<keyword id="KW-0002">3D-structure</keyword>
<keyword id="KW-0963">Cytoplasm</keyword>
<keyword id="KW-0216">Detoxification</keyword>
<keyword id="KW-0341">Growth regulation</keyword>
<keyword id="KW-0539">Nucleus</keyword>
<keyword id="KW-1185">Reference proteome</keyword>
<keyword id="KW-0808">Transferase</keyword>
<comment type="function">
    <text evidence="3 5 9">Exhibits glutathione-dependent thiol transferase activities. Can use glutathione (GSH) and 1-chloro-2,4-dinitrobenzene (CDNB) as substrates. Involved in the regulation of far-red light influence on development (PubMed:17220357). Regulator of the interplay between light and JA signaling by increasing JAR1/FIN219 efficiency (PubMed:28223489). Maybe involved in gravitropic signal transduction (Probable).</text>
</comment>
<comment type="catalytic activity">
    <reaction evidence="3 5">
        <text>RX + glutathione = an S-substituted glutathione + a halide anion + H(+)</text>
        <dbReference type="Rhea" id="RHEA:16437"/>
        <dbReference type="ChEBI" id="CHEBI:15378"/>
        <dbReference type="ChEBI" id="CHEBI:16042"/>
        <dbReference type="ChEBI" id="CHEBI:17792"/>
        <dbReference type="ChEBI" id="CHEBI:57925"/>
        <dbReference type="ChEBI" id="CHEBI:90779"/>
        <dbReference type="EC" id="2.5.1.18"/>
    </reaction>
</comment>
<comment type="activity regulation">
    <text evidence="5">Activated by JAR1/FIN219.</text>
</comment>
<comment type="biophysicochemical properties">
    <kinetics>
        <KM evidence="3">0.467 mM for glutathione</KM>
        <KM evidence="3">1.794 mM for 1-chloro-2,4- dinitrobenzene</KM>
    </kinetics>
</comment>
<comment type="subunit">
    <text evidence="3 5">Homodimerization. Interacts with JAR1/FIN219 under continuous far red (cFR) light to stimulate JAR1/FIN219 activity and substrate selectivity.</text>
</comment>
<comment type="subcellular location">
    <subcellularLocation>
        <location evidence="3">Nucleus</location>
    </subcellularLocation>
    <subcellularLocation>
        <location evidence="3">Cytoplasm</location>
        <location evidence="3">Cytosol</location>
    </subcellularLocation>
</comment>
<comment type="tissue specificity">
    <text evidence="3">Mostly associated with vascular tissues, especially near hydathodes.</text>
</comment>
<comment type="developmental stage">
    <text evidence="3">Light-dependent expression. Developmentally regulated. First observed in cotyledon vascular tissues of young seedlings. Appears at the shoot apex, in the upper part of hypocotyls and in roots in one week old seedlings. Later highly expressed in the basal portion of trichomes, veins, shoot apex, and hypocotyls. Becomes restricted to the margins of leaves and in roots. In drakness and blue light (B) grown plants, localized in cotyledons vascular tissues. In far-red (FR) and red (R) light conditions, mostly confined to regions of vascular tissues near the hydathode of cotyledons. In adult plants, expressed in vascular tissues of flower organs.</text>
</comment>
<comment type="induction">
    <text evidence="4">Induced by a gravistimulation.</text>
</comment>
<comment type="disruption phenotype">
    <text evidence="3">Hyposensitive hypocotyl phenotype under continuous far red (cFR) light and a delayed flowering phenotype under long-day conditions.</text>
</comment>
<comment type="similarity">
    <text evidence="8">Belongs to the GST superfamily. Tau family.</text>
</comment>
<comment type="sequence caution" evidence="8">
    <conflict type="erroneous gene model prediction">
        <sequence resource="EMBL-CDS" id="AAF71798"/>
    </conflict>
</comment>
<gene>
    <name evidence="6" type="primary">GSTU20</name>
    <name evidence="7" type="synonym">FIP1</name>
    <name evidence="10" type="ordered locus">At1g78370</name>
    <name evidence="11" type="ORF">F3F9.11</name>
</gene>
<protein>
    <recommendedName>
        <fullName evidence="6">Glutathione S-transferase U20</fullName>
        <shortName evidence="6">AtGSTU20</shortName>
        <ecNumber evidence="3 5">2.5.1.18</ecNumber>
    </recommendedName>
    <alternativeName>
        <fullName evidence="7">FIN219-interacting protein 1</fullName>
    </alternativeName>
    <alternativeName>
        <fullName evidence="6">GST class-tau member 20</fullName>
    </alternativeName>
</protein>
<accession>Q8L7C9</accession>
<accession>Q8LBS3</accession>
<accession>Q9M9F4</accession>
<feature type="chain" id="PRO_0000403932" description="Glutathione S-transferase U20">
    <location>
        <begin position="1"/>
        <end position="217"/>
    </location>
</feature>
<feature type="domain" description="GST N-terminal" evidence="1">
    <location>
        <begin position="3"/>
        <end position="82"/>
    </location>
</feature>
<feature type="domain" description="GST C-terminal" evidence="2">
    <location>
        <begin position="88"/>
        <end position="208"/>
    </location>
</feature>
<feature type="binding site" evidence="5 12 13 14 15 16 17 18 19 20 21 22">
    <location>
        <position position="13"/>
    </location>
    <ligand>
        <name>glutathione</name>
        <dbReference type="ChEBI" id="CHEBI:57925"/>
    </ligand>
</feature>
<feature type="binding site" evidence="5 12 13 14 15 16 17 18 19 20 21 22">
    <location>
        <position position="54"/>
    </location>
    <ligand>
        <name>glutathione</name>
        <dbReference type="ChEBI" id="CHEBI:57925"/>
    </ligand>
</feature>
<feature type="binding site" evidence="5 12 13 14 15 16 17 18 19 20 21 22">
    <location>
        <position position="67"/>
    </location>
    <ligand>
        <name>glutathione</name>
        <dbReference type="ChEBI" id="CHEBI:57925"/>
    </ligand>
</feature>
<feature type="sequence conflict" description="In Ref. 4; AAM64587." evidence="8" ref="4">
    <original>K</original>
    <variation>N</variation>
    <location>
        <position position="181"/>
    </location>
</feature>
<feature type="strand" evidence="23">
    <location>
        <begin position="6"/>
        <end position="9"/>
    </location>
</feature>
<feature type="helix" evidence="23">
    <location>
        <begin position="14"/>
        <end position="26"/>
    </location>
</feature>
<feature type="strand" evidence="23">
    <location>
        <begin position="31"/>
        <end position="34"/>
    </location>
</feature>
<feature type="helix" evidence="25">
    <location>
        <begin position="37"/>
        <end position="39"/>
    </location>
</feature>
<feature type="helix" evidence="23">
    <location>
        <begin position="42"/>
        <end position="47"/>
    </location>
</feature>
<feature type="turn" evidence="23">
    <location>
        <begin position="49"/>
        <end position="51"/>
    </location>
</feature>
<feature type="strand" evidence="23">
    <location>
        <begin position="56"/>
        <end position="59"/>
    </location>
</feature>
<feature type="strand" evidence="23">
    <location>
        <begin position="62"/>
        <end position="66"/>
    </location>
</feature>
<feature type="helix" evidence="23">
    <location>
        <begin position="67"/>
        <end position="77"/>
    </location>
</feature>
<feature type="strand" evidence="24">
    <location>
        <begin position="80"/>
        <end position="82"/>
    </location>
</feature>
<feature type="helix" evidence="23">
    <location>
        <begin position="89"/>
        <end position="103"/>
    </location>
</feature>
<feature type="helix" evidence="23">
    <location>
        <begin position="105"/>
        <end position="115"/>
    </location>
</feature>
<feature type="helix" evidence="23">
    <location>
        <begin position="119"/>
        <end position="139"/>
    </location>
</feature>
<feature type="strand" evidence="23">
    <location>
        <begin position="143"/>
        <end position="150"/>
    </location>
</feature>
<feature type="helix" evidence="23">
    <location>
        <begin position="152"/>
        <end position="158"/>
    </location>
</feature>
<feature type="turn" evidence="23">
    <location>
        <begin position="159"/>
        <end position="162"/>
    </location>
</feature>
<feature type="helix" evidence="23">
    <location>
        <begin position="164"/>
        <end position="170"/>
    </location>
</feature>
<feature type="helix" evidence="23">
    <location>
        <begin position="175"/>
        <end position="178"/>
    </location>
</feature>
<feature type="helix" evidence="23">
    <location>
        <begin position="180"/>
        <end position="189"/>
    </location>
</feature>
<feature type="turn" evidence="23">
    <location>
        <begin position="193"/>
        <end position="198"/>
    </location>
</feature>
<feature type="helix" evidence="23">
    <location>
        <begin position="202"/>
        <end position="215"/>
    </location>
</feature>
<sequence length="217" mass="25006">MANLPILLDYWPSMFGMRARVALREKGVEFEYREEDFSNKSPLLLQSNPIHKKIPVLVHNGKPVCESLNVVQYVDEAWPEKNPFFPSDPYGRAQARFWADFVDKKFTDAQFKVWGKKGEEQEAGKKEFIEAVKILESELGDKPYFGGDSFGYVDISLITFSSWFQAYEKFGNFSIESESPKLIAWAKRCMEKESVSKSLPDSEKIVAYAAEYRKNNL</sequence>
<dbReference type="EC" id="2.5.1.18" evidence="3 5"/>
<dbReference type="EMBL" id="AC013430">
    <property type="protein sequence ID" value="AAF71798.1"/>
    <property type="status" value="ALT_SEQ"/>
    <property type="molecule type" value="Genomic_DNA"/>
</dbReference>
<dbReference type="EMBL" id="CP002684">
    <property type="protein sequence ID" value="AEE36098.1"/>
    <property type="molecule type" value="Genomic_DNA"/>
</dbReference>
<dbReference type="EMBL" id="AY136338">
    <property type="protein sequence ID" value="AAM97004.1"/>
    <property type="molecule type" value="mRNA"/>
</dbReference>
<dbReference type="EMBL" id="BT000168">
    <property type="protein sequence ID" value="AAN15487.1"/>
    <property type="molecule type" value="mRNA"/>
</dbReference>
<dbReference type="EMBL" id="AY087026">
    <property type="protein sequence ID" value="AAM64587.1"/>
    <property type="molecule type" value="mRNA"/>
</dbReference>
<dbReference type="RefSeq" id="NP_177958.1">
    <property type="nucleotide sequence ID" value="NM_106484.4"/>
</dbReference>
<dbReference type="PDB" id="5ECH">
    <property type="method" value="X-ray"/>
    <property type="resolution" value="2.14 A"/>
    <property type="chains" value="B/C/E/F=1-217"/>
</dbReference>
<dbReference type="PDB" id="5ECI">
    <property type="method" value="X-ray"/>
    <property type="resolution" value="1.56 A"/>
    <property type="chains" value="B/C/E/F=1-217"/>
</dbReference>
<dbReference type="PDB" id="5ECK">
    <property type="method" value="X-ray"/>
    <property type="resolution" value="1.54 A"/>
    <property type="chains" value="B/C/E/F=1-217"/>
</dbReference>
<dbReference type="PDB" id="5ECL">
    <property type="method" value="X-ray"/>
    <property type="resolution" value="1.85 A"/>
    <property type="chains" value="B/C/E/F=1-217"/>
</dbReference>
<dbReference type="PDB" id="5ECM">
    <property type="method" value="X-ray"/>
    <property type="resolution" value="1.60 A"/>
    <property type="chains" value="B/C/E/F=1-217"/>
</dbReference>
<dbReference type="PDB" id="5ECN">
    <property type="method" value="X-ray"/>
    <property type="resolution" value="1.72 A"/>
    <property type="chains" value="B/C/E/F=1-217"/>
</dbReference>
<dbReference type="PDB" id="5ECO">
    <property type="method" value="X-ray"/>
    <property type="resolution" value="1.80 A"/>
    <property type="chains" value="B/C/E/F=1-217"/>
</dbReference>
<dbReference type="PDB" id="5ECP">
    <property type="method" value="X-ray"/>
    <property type="resolution" value="2.25 A"/>
    <property type="chains" value="B/C/E/F=1-217"/>
</dbReference>
<dbReference type="PDB" id="5ECQ">
    <property type="method" value="X-ray"/>
    <property type="resolution" value="1.66 A"/>
    <property type="chains" value="B/C/E/F=1-217"/>
</dbReference>
<dbReference type="PDB" id="5ECR">
    <property type="method" value="X-ray"/>
    <property type="resolution" value="1.72 A"/>
    <property type="chains" value="B/C/E/F=1-217"/>
</dbReference>
<dbReference type="PDB" id="5ECS">
    <property type="method" value="X-ray"/>
    <property type="resolution" value="1.65 A"/>
    <property type="chains" value="A/B=1-217"/>
</dbReference>
<dbReference type="PDBsum" id="5ECH"/>
<dbReference type="PDBsum" id="5ECI"/>
<dbReference type="PDBsum" id="5ECK"/>
<dbReference type="PDBsum" id="5ECL"/>
<dbReference type="PDBsum" id="5ECM"/>
<dbReference type="PDBsum" id="5ECN"/>
<dbReference type="PDBsum" id="5ECO"/>
<dbReference type="PDBsum" id="5ECP"/>
<dbReference type="PDBsum" id="5ECQ"/>
<dbReference type="PDBsum" id="5ECR"/>
<dbReference type="PDBsum" id="5ECS"/>
<dbReference type="SMR" id="Q8L7C9"/>
<dbReference type="BioGRID" id="29392">
    <property type="interactions" value="4"/>
</dbReference>
<dbReference type="FunCoup" id="Q8L7C9">
    <property type="interactions" value="273"/>
</dbReference>
<dbReference type="STRING" id="3702.Q8L7C9"/>
<dbReference type="iPTMnet" id="Q8L7C9"/>
<dbReference type="PaxDb" id="3702-AT1G78370.1"/>
<dbReference type="ProteomicsDB" id="247262"/>
<dbReference type="EnsemblPlants" id="AT1G78370.1">
    <property type="protein sequence ID" value="AT1G78370.1"/>
    <property type="gene ID" value="AT1G78370"/>
</dbReference>
<dbReference type="GeneID" id="844173"/>
<dbReference type="Gramene" id="AT1G78370.1">
    <property type="protein sequence ID" value="AT1G78370.1"/>
    <property type="gene ID" value="AT1G78370"/>
</dbReference>
<dbReference type="KEGG" id="ath:AT1G78370"/>
<dbReference type="Araport" id="AT1G78370"/>
<dbReference type="TAIR" id="AT1G78370">
    <property type="gene designation" value="GSTU20"/>
</dbReference>
<dbReference type="eggNOG" id="KOG0406">
    <property type="taxonomic scope" value="Eukaryota"/>
</dbReference>
<dbReference type="HOGENOM" id="CLU_011226_18_2_1"/>
<dbReference type="InParanoid" id="Q8L7C9"/>
<dbReference type="OMA" id="SQTRLWK"/>
<dbReference type="OrthoDB" id="202840at2759"/>
<dbReference type="PhylomeDB" id="Q8L7C9"/>
<dbReference type="BioCyc" id="ARA:AT1G78370-MONOMER"/>
<dbReference type="SABIO-RK" id="Q8L7C9"/>
<dbReference type="CD-CODE" id="4299E36E">
    <property type="entry name" value="Nucleolus"/>
</dbReference>
<dbReference type="PRO" id="PR:Q8L7C9"/>
<dbReference type="Proteomes" id="UP000006548">
    <property type="component" value="Chromosome 1"/>
</dbReference>
<dbReference type="ExpressionAtlas" id="Q8L7C9">
    <property type="expression patterns" value="baseline and differential"/>
</dbReference>
<dbReference type="GO" id="GO:0048046">
    <property type="term" value="C:apoplast"/>
    <property type="evidence" value="ECO:0007005"/>
    <property type="project" value="TAIR"/>
</dbReference>
<dbReference type="GO" id="GO:0009507">
    <property type="term" value="C:chloroplast"/>
    <property type="evidence" value="ECO:0007005"/>
    <property type="project" value="TAIR"/>
</dbReference>
<dbReference type="GO" id="GO:0005737">
    <property type="term" value="C:cytoplasm"/>
    <property type="evidence" value="ECO:0000314"/>
    <property type="project" value="UniProtKB"/>
</dbReference>
<dbReference type="GO" id="GO:0005829">
    <property type="term" value="C:cytosol"/>
    <property type="evidence" value="ECO:0000314"/>
    <property type="project" value="TAIR"/>
</dbReference>
<dbReference type="GO" id="GO:0005739">
    <property type="term" value="C:mitochondrion"/>
    <property type="evidence" value="ECO:0007005"/>
    <property type="project" value="TAIR"/>
</dbReference>
<dbReference type="GO" id="GO:0005634">
    <property type="term" value="C:nucleus"/>
    <property type="evidence" value="ECO:0000314"/>
    <property type="project" value="UniProtKB"/>
</dbReference>
<dbReference type="GO" id="GO:0019899">
    <property type="term" value="F:enzyme binding"/>
    <property type="evidence" value="ECO:0000353"/>
    <property type="project" value="UniProtKB"/>
</dbReference>
<dbReference type="GO" id="GO:0043295">
    <property type="term" value="F:glutathione binding"/>
    <property type="evidence" value="ECO:0000314"/>
    <property type="project" value="UniProtKB"/>
</dbReference>
<dbReference type="GO" id="GO:0004364">
    <property type="term" value="F:glutathione transferase activity"/>
    <property type="evidence" value="ECO:0000314"/>
    <property type="project" value="UniProtKB"/>
</dbReference>
<dbReference type="GO" id="GO:0006749">
    <property type="term" value="P:glutathione metabolic process"/>
    <property type="evidence" value="ECO:0007669"/>
    <property type="project" value="InterPro"/>
</dbReference>
<dbReference type="GO" id="GO:2000030">
    <property type="term" value="P:regulation of response to red or far red light"/>
    <property type="evidence" value="ECO:0000315"/>
    <property type="project" value="UniProtKB"/>
</dbReference>
<dbReference type="GO" id="GO:0009629">
    <property type="term" value="P:response to gravity"/>
    <property type="evidence" value="ECO:0000270"/>
    <property type="project" value="UniProtKB"/>
</dbReference>
<dbReference type="GO" id="GO:0009407">
    <property type="term" value="P:toxin catabolic process"/>
    <property type="evidence" value="ECO:0000304"/>
    <property type="project" value="TAIR"/>
</dbReference>
<dbReference type="CDD" id="cd03185">
    <property type="entry name" value="GST_C_Tau"/>
    <property type="match status" value="1"/>
</dbReference>
<dbReference type="CDD" id="cd03058">
    <property type="entry name" value="GST_N_Tau"/>
    <property type="match status" value="1"/>
</dbReference>
<dbReference type="FunFam" id="1.20.1050.10:FF:000018">
    <property type="entry name" value="Glutathione S-transferase U20"/>
    <property type="match status" value="1"/>
</dbReference>
<dbReference type="FunFam" id="3.40.30.10:FF:000014">
    <property type="entry name" value="Tau class glutathione S-transferase"/>
    <property type="match status" value="1"/>
</dbReference>
<dbReference type="Gene3D" id="1.20.1050.10">
    <property type="match status" value="1"/>
</dbReference>
<dbReference type="Gene3D" id="3.40.30.10">
    <property type="entry name" value="Glutaredoxin"/>
    <property type="match status" value="1"/>
</dbReference>
<dbReference type="InterPro" id="IPR010987">
    <property type="entry name" value="Glutathione-S-Trfase_C-like"/>
</dbReference>
<dbReference type="InterPro" id="IPR036282">
    <property type="entry name" value="Glutathione-S-Trfase_C_sf"/>
</dbReference>
<dbReference type="InterPro" id="IPR040079">
    <property type="entry name" value="Glutathione_S-Trfase"/>
</dbReference>
<dbReference type="InterPro" id="IPR004045">
    <property type="entry name" value="Glutathione_S-Trfase_N"/>
</dbReference>
<dbReference type="InterPro" id="IPR045074">
    <property type="entry name" value="GST_C_Tau"/>
</dbReference>
<dbReference type="InterPro" id="IPR045073">
    <property type="entry name" value="Omega/Tau-like"/>
</dbReference>
<dbReference type="InterPro" id="IPR036249">
    <property type="entry name" value="Thioredoxin-like_sf"/>
</dbReference>
<dbReference type="PANTHER" id="PTHR11260:SF601">
    <property type="entry name" value="GLUTATHIONE S-TRANSFERASE U20"/>
    <property type="match status" value="1"/>
</dbReference>
<dbReference type="PANTHER" id="PTHR11260">
    <property type="entry name" value="GLUTATHIONE S-TRANSFERASE, GST, SUPERFAMILY, GST DOMAIN CONTAINING"/>
    <property type="match status" value="1"/>
</dbReference>
<dbReference type="Pfam" id="PF13410">
    <property type="entry name" value="GST_C_2"/>
    <property type="match status" value="1"/>
</dbReference>
<dbReference type="Pfam" id="PF02798">
    <property type="entry name" value="GST_N"/>
    <property type="match status" value="1"/>
</dbReference>
<dbReference type="SFLD" id="SFLDS00019">
    <property type="entry name" value="Glutathione_Transferase_(cytos"/>
    <property type="match status" value="1"/>
</dbReference>
<dbReference type="SFLD" id="SFLDG01152">
    <property type="entry name" value="Main.3:_Omega-_and_Tau-like"/>
    <property type="match status" value="1"/>
</dbReference>
<dbReference type="SUPFAM" id="SSF47616">
    <property type="entry name" value="GST C-terminal domain-like"/>
    <property type="match status" value="1"/>
</dbReference>
<dbReference type="SUPFAM" id="SSF52833">
    <property type="entry name" value="Thioredoxin-like"/>
    <property type="match status" value="1"/>
</dbReference>
<dbReference type="PROSITE" id="PS50405">
    <property type="entry name" value="GST_CTER"/>
    <property type="match status" value="1"/>
</dbReference>
<dbReference type="PROSITE" id="PS50404">
    <property type="entry name" value="GST_NTER"/>
    <property type="match status" value="1"/>
</dbReference>
<name>GSTUK_ARATH</name>
<evidence type="ECO:0000255" key="1">
    <source>
        <dbReference type="PROSITE-ProRule" id="PRU00684"/>
    </source>
</evidence>
<evidence type="ECO:0000255" key="2">
    <source>
        <dbReference type="PROSITE-ProRule" id="PRU00685"/>
    </source>
</evidence>
<evidence type="ECO:0000269" key="3">
    <source>
    </source>
</evidence>
<evidence type="ECO:0000269" key="4">
    <source>
    </source>
</evidence>
<evidence type="ECO:0000269" key="5">
    <source>
    </source>
</evidence>
<evidence type="ECO:0000303" key="6">
    <source>
    </source>
</evidence>
<evidence type="ECO:0000303" key="7">
    <source>
    </source>
</evidence>
<evidence type="ECO:0000305" key="8"/>
<evidence type="ECO:0000305" key="9">
    <source>
    </source>
</evidence>
<evidence type="ECO:0000312" key="10">
    <source>
        <dbReference type="Araport" id="AT1G78370"/>
    </source>
</evidence>
<evidence type="ECO:0000312" key="11">
    <source>
        <dbReference type="EMBL" id="AAF71798.1"/>
    </source>
</evidence>
<evidence type="ECO:0007744" key="12">
    <source>
        <dbReference type="PDB" id="5ECH"/>
    </source>
</evidence>
<evidence type="ECO:0007744" key="13">
    <source>
        <dbReference type="PDB" id="5ECI"/>
    </source>
</evidence>
<evidence type="ECO:0007744" key="14">
    <source>
        <dbReference type="PDB" id="5ECK"/>
    </source>
</evidence>
<evidence type="ECO:0007744" key="15">
    <source>
        <dbReference type="PDB" id="5ECL"/>
    </source>
</evidence>
<evidence type="ECO:0007744" key="16">
    <source>
        <dbReference type="PDB" id="5ECM"/>
    </source>
</evidence>
<evidence type="ECO:0007744" key="17">
    <source>
        <dbReference type="PDB" id="5ECN"/>
    </source>
</evidence>
<evidence type="ECO:0007744" key="18">
    <source>
        <dbReference type="PDB" id="5ECO"/>
    </source>
</evidence>
<evidence type="ECO:0007744" key="19">
    <source>
        <dbReference type="PDB" id="5ECP"/>
    </source>
</evidence>
<evidence type="ECO:0007744" key="20">
    <source>
        <dbReference type="PDB" id="5ECQ"/>
    </source>
</evidence>
<evidence type="ECO:0007744" key="21">
    <source>
        <dbReference type="PDB" id="5ECR"/>
    </source>
</evidence>
<evidence type="ECO:0007744" key="22">
    <source>
        <dbReference type="PDB" id="5ECS"/>
    </source>
</evidence>
<evidence type="ECO:0007829" key="23">
    <source>
        <dbReference type="PDB" id="5ECK"/>
    </source>
</evidence>
<evidence type="ECO:0007829" key="24">
    <source>
        <dbReference type="PDB" id="5ECR"/>
    </source>
</evidence>
<evidence type="ECO:0007829" key="25">
    <source>
        <dbReference type="PDB" id="5ECS"/>
    </source>
</evidence>
<proteinExistence type="evidence at protein level"/>
<reference key="1">
    <citation type="journal article" date="2000" name="Nature">
        <title>Sequence and analysis of chromosome 1 of the plant Arabidopsis thaliana.</title>
        <authorList>
            <person name="Theologis A."/>
            <person name="Ecker J.R."/>
            <person name="Palm C.J."/>
            <person name="Federspiel N.A."/>
            <person name="Kaul S."/>
            <person name="White O."/>
            <person name="Alonso J."/>
            <person name="Altafi H."/>
            <person name="Araujo R."/>
            <person name="Bowman C.L."/>
            <person name="Brooks S.Y."/>
            <person name="Buehler E."/>
            <person name="Chan A."/>
            <person name="Chao Q."/>
            <person name="Chen H."/>
            <person name="Cheuk R.F."/>
            <person name="Chin C.W."/>
            <person name="Chung M.K."/>
            <person name="Conn L."/>
            <person name="Conway A.B."/>
            <person name="Conway A.R."/>
            <person name="Creasy T.H."/>
            <person name="Dewar K."/>
            <person name="Dunn P."/>
            <person name="Etgu P."/>
            <person name="Feldblyum T.V."/>
            <person name="Feng J.-D."/>
            <person name="Fong B."/>
            <person name="Fujii C.Y."/>
            <person name="Gill J.E."/>
            <person name="Goldsmith A.D."/>
            <person name="Haas B."/>
            <person name="Hansen N.F."/>
            <person name="Hughes B."/>
            <person name="Huizar L."/>
            <person name="Hunter J.L."/>
            <person name="Jenkins J."/>
            <person name="Johnson-Hopson C."/>
            <person name="Khan S."/>
            <person name="Khaykin E."/>
            <person name="Kim C.J."/>
            <person name="Koo H.L."/>
            <person name="Kremenetskaia I."/>
            <person name="Kurtz D.B."/>
            <person name="Kwan A."/>
            <person name="Lam B."/>
            <person name="Langin-Hooper S."/>
            <person name="Lee A."/>
            <person name="Lee J.M."/>
            <person name="Lenz C.A."/>
            <person name="Li J.H."/>
            <person name="Li Y.-P."/>
            <person name="Lin X."/>
            <person name="Liu S.X."/>
            <person name="Liu Z.A."/>
            <person name="Luros J.S."/>
            <person name="Maiti R."/>
            <person name="Marziali A."/>
            <person name="Militscher J."/>
            <person name="Miranda M."/>
            <person name="Nguyen M."/>
            <person name="Nierman W.C."/>
            <person name="Osborne B.I."/>
            <person name="Pai G."/>
            <person name="Peterson J."/>
            <person name="Pham P.K."/>
            <person name="Rizzo M."/>
            <person name="Rooney T."/>
            <person name="Rowley D."/>
            <person name="Sakano H."/>
            <person name="Salzberg S.L."/>
            <person name="Schwartz J.R."/>
            <person name="Shinn P."/>
            <person name="Southwick A.M."/>
            <person name="Sun H."/>
            <person name="Tallon L.J."/>
            <person name="Tambunga G."/>
            <person name="Toriumi M.J."/>
            <person name="Town C.D."/>
            <person name="Utterback T."/>
            <person name="Van Aken S."/>
            <person name="Vaysberg M."/>
            <person name="Vysotskaia V.S."/>
            <person name="Walker M."/>
            <person name="Wu D."/>
            <person name="Yu G."/>
            <person name="Fraser C.M."/>
            <person name="Venter J.C."/>
            <person name="Davis R.W."/>
        </authorList>
    </citation>
    <scope>NUCLEOTIDE SEQUENCE [LARGE SCALE GENOMIC DNA]</scope>
    <source>
        <strain>cv. Columbia</strain>
    </source>
</reference>
<reference key="2">
    <citation type="journal article" date="2017" name="Plant J.">
        <title>Araport11: a complete reannotation of the Arabidopsis thaliana reference genome.</title>
        <authorList>
            <person name="Cheng C.Y."/>
            <person name="Krishnakumar V."/>
            <person name="Chan A.P."/>
            <person name="Thibaud-Nissen F."/>
            <person name="Schobel S."/>
            <person name="Town C.D."/>
        </authorList>
    </citation>
    <scope>GENOME REANNOTATION</scope>
    <source>
        <strain>cv. Columbia</strain>
    </source>
</reference>
<reference key="3">
    <citation type="journal article" date="2003" name="Science">
        <title>Empirical analysis of transcriptional activity in the Arabidopsis genome.</title>
        <authorList>
            <person name="Yamada K."/>
            <person name="Lim J."/>
            <person name="Dale J.M."/>
            <person name="Chen H."/>
            <person name="Shinn P."/>
            <person name="Palm C.J."/>
            <person name="Southwick A.M."/>
            <person name="Wu H.C."/>
            <person name="Kim C.J."/>
            <person name="Nguyen M."/>
            <person name="Pham P.K."/>
            <person name="Cheuk R.F."/>
            <person name="Karlin-Newmann G."/>
            <person name="Liu S.X."/>
            <person name="Lam B."/>
            <person name="Sakano H."/>
            <person name="Wu T."/>
            <person name="Yu G."/>
            <person name="Miranda M."/>
            <person name="Quach H.L."/>
            <person name="Tripp M."/>
            <person name="Chang C.H."/>
            <person name="Lee J.M."/>
            <person name="Toriumi M.J."/>
            <person name="Chan M.M."/>
            <person name="Tang C.C."/>
            <person name="Onodera C.S."/>
            <person name="Deng J.M."/>
            <person name="Akiyama K."/>
            <person name="Ansari Y."/>
            <person name="Arakawa T."/>
            <person name="Banh J."/>
            <person name="Banno F."/>
            <person name="Bowser L."/>
            <person name="Brooks S.Y."/>
            <person name="Carninci P."/>
            <person name="Chao Q."/>
            <person name="Choy N."/>
            <person name="Enju A."/>
            <person name="Goldsmith A.D."/>
            <person name="Gurjal M."/>
            <person name="Hansen N.F."/>
            <person name="Hayashizaki Y."/>
            <person name="Johnson-Hopson C."/>
            <person name="Hsuan V.W."/>
            <person name="Iida K."/>
            <person name="Karnes M."/>
            <person name="Khan S."/>
            <person name="Koesema E."/>
            <person name="Ishida J."/>
            <person name="Jiang P.X."/>
            <person name="Jones T."/>
            <person name="Kawai J."/>
            <person name="Kamiya A."/>
            <person name="Meyers C."/>
            <person name="Nakajima M."/>
            <person name="Narusaka M."/>
            <person name="Seki M."/>
            <person name="Sakurai T."/>
            <person name="Satou M."/>
            <person name="Tamse R."/>
            <person name="Vaysberg M."/>
            <person name="Wallender E.K."/>
            <person name="Wong C."/>
            <person name="Yamamura Y."/>
            <person name="Yuan S."/>
            <person name="Shinozaki K."/>
            <person name="Davis R.W."/>
            <person name="Theologis A."/>
            <person name="Ecker J.R."/>
        </authorList>
    </citation>
    <scope>NUCLEOTIDE SEQUENCE [LARGE SCALE MRNA]</scope>
    <source>
        <strain>cv. Columbia</strain>
    </source>
</reference>
<reference key="4">
    <citation type="submission" date="2002-03" db="EMBL/GenBank/DDBJ databases">
        <title>Full-length cDNA from Arabidopsis thaliana.</title>
        <authorList>
            <person name="Brover V.V."/>
            <person name="Troukhan M.E."/>
            <person name="Alexandrov N.A."/>
            <person name="Lu Y.-P."/>
            <person name="Flavell R.B."/>
            <person name="Feldmann K.A."/>
        </authorList>
    </citation>
    <scope>NUCLEOTIDE SEQUENCE [LARGE SCALE MRNA]</scope>
</reference>
<reference key="5">
    <citation type="journal article" date="2002" name="Plant Mol. Biol.">
        <title>Probing the diversity of the Arabidopsis glutathione S-transferase gene family.</title>
        <authorList>
            <person name="Wagner U."/>
            <person name="Edwards R."/>
            <person name="Dixon D.P."/>
            <person name="Mauch F."/>
        </authorList>
    </citation>
    <scope>GENE FAMILY</scope>
    <scope>NOMENCLATURE</scope>
</reference>
<reference key="6">
    <citation type="journal article" date="2006" name="Plant Physiol.">
        <title>Desensitization of GSTF8 induction by a prior chemical treatment is long lasting and operates in a tissue-dependent manner.</title>
        <authorList>
            <person name="Foley R.C."/>
            <person name="Sappl P.G."/>
            <person name="Perl-Treves R."/>
            <person name="Millar A.H."/>
            <person name="Singh K.B."/>
        </authorList>
    </citation>
    <scope>IDENTIFICATION BY MASS SPECTROMETRY</scope>
</reference>
<reference key="7">
    <citation type="journal article" date="2007" name="Plant Physiol.">
        <title>Glutathione S-transferase interacting with far-red insensitive 219 is involved in phytochrome A-mediated signaling in Arabidopsis.</title>
        <authorList>
            <person name="Chen I.-C."/>
            <person name="Huang I.-C."/>
            <person name="Liu M.-J."/>
            <person name="Wang Z.-G."/>
            <person name="Chung S.-S."/>
            <person name="Hsieh H.-L."/>
        </authorList>
    </citation>
    <scope>FUNCTION</scope>
    <scope>INTERACTION WITH JAR1/FIN219</scope>
    <scope>DISRUPTION PHENOTYPE</scope>
    <scope>TISSUE SPECIFICITY</scope>
    <scope>DEVELOPMENTAL STAGE</scope>
    <scope>SUBCELLULAR LOCATION</scope>
    <scope>BIOPHYSICOCHEMICAL PROPERTIES</scope>
    <scope>CATALYTIC ACTIVITY</scope>
    <source>
        <strain>cv. Columbia</strain>
    </source>
</reference>
<reference key="8">
    <citation type="journal article" date="2013" name="Am. J. Bot.">
        <title>A proteomics approach identifies novel proteins involved in gravitropic signal transduction.</title>
        <authorList>
            <person name="Schenck C.A."/>
            <person name="Nadella V."/>
            <person name="Clay S.L."/>
            <person name="Lindner J."/>
            <person name="Abrams Z."/>
            <person name="Wyatt S.E."/>
        </authorList>
    </citation>
    <scope>FUNCTION</scope>
    <scope>INDUCTION BY GRAVITY</scope>
    <source>
        <strain>cv. Columbia</strain>
        <tissue>Flower</tissue>
    </source>
</reference>
<reference key="9">
    <citation type="journal article" date="2017" name="Proc. Natl. Acad. Sci. U.S.A.">
        <title>Structural basis of jasmonate-amido synthetase FIN219 in complex with glutathione S-transferase FIP1 during the JA signal regulation.</title>
        <authorList>
            <person name="Chen C.-Y."/>
            <person name="Ho S.-S."/>
            <person name="Kuo T.-Y."/>
            <person name="Hsieh H.-L."/>
            <person name="Cheng Y.-S."/>
        </authorList>
    </citation>
    <scope>X-RAY CRYSTALLOGRAPHY (1.54 ANGSTROMS) IN COMPLEX WITH JAR1/FIN219 AND GLUTATHIONE</scope>
    <scope>FUNCTION</scope>
    <scope>HOMODIMER</scope>
    <scope>CATALYTIC ACTIVITY</scope>
    <scope>ACTIVITY REGULATION</scope>
</reference>